<name>YAF4_CAEEL</name>
<reference key="1">
    <citation type="journal article" date="1998" name="Science">
        <title>Genome sequence of the nematode C. elegans: a platform for investigating biology.</title>
        <authorList>
            <consortium name="The C. elegans sequencing consortium"/>
        </authorList>
    </citation>
    <scope>NUCLEOTIDE SEQUENCE [LARGE SCALE GENOMIC DNA]</scope>
    <source>
        <strain>Bristol N2</strain>
    </source>
</reference>
<accession>P52882</accession>
<sequence length="187" mass="21054">MRLHRTNNSRRCTILLILALKIFDFVDTLACYSCIALNYRQNVLSRNDALSPPQNRENLTALFDVLSKNNISHVEVSSSCADVTLTTQPSFLNTPIAICDMNDKCVKMDFYYSGEKVVLRNCLSNLMETVNSPKLKKYCPMYSDDRSEIKVGPMSNVSVCSCQSDLCNSSEKSSVMIYFSIAFILVL</sequence>
<keyword id="KW-0325">Glycoprotein</keyword>
<keyword id="KW-1185">Reference proteome</keyword>
<keyword id="KW-0964">Secreted</keyword>
<keyword id="KW-0732">Signal</keyword>
<feature type="signal peptide" evidence="1">
    <location>
        <begin position="1"/>
        <end position="28"/>
    </location>
</feature>
<feature type="chain" id="PRO_0000065349" description="Uncharacterized protein F46C5.4">
    <location>
        <begin position="29"/>
        <end position="187"/>
    </location>
</feature>
<feature type="glycosylation site" description="N-linked (GlcNAc...) asparagine" evidence="1">
    <location>
        <position position="58"/>
    </location>
</feature>
<feature type="glycosylation site" description="N-linked (GlcNAc...) asparagine" evidence="1">
    <location>
        <position position="70"/>
    </location>
</feature>
<feature type="glycosylation site" description="N-linked (GlcNAc...) asparagine" evidence="1">
    <location>
        <position position="156"/>
    </location>
</feature>
<feature type="glycosylation site" description="N-linked (GlcNAc...) asparagine" evidence="1">
    <location>
        <position position="168"/>
    </location>
</feature>
<organism>
    <name type="scientific">Caenorhabditis elegans</name>
    <dbReference type="NCBI Taxonomy" id="6239"/>
    <lineage>
        <taxon>Eukaryota</taxon>
        <taxon>Metazoa</taxon>
        <taxon>Ecdysozoa</taxon>
        <taxon>Nematoda</taxon>
        <taxon>Chromadorea</taxon>
        <taxon>Rhabditida</taxon>
        <taxon>Rhabditina</taxon>
        <taxon>Rhabditomorpha</taxon>
        <taxon>Rhabditoidea</taxon>
        <taxon>Rhabditidae</taxon>
        <taxon>Peloderinae</taxon>
        <taxon>Caenorhabditis</taxon>
    </lineage>
</organism>
<proteinExistence type="inferred from homology"/>
<gene>
    <name type="ORF">F46C5.4</name>
</gene>
<comment type="subcellular location">
    <subcellularLocation>
        <location evidence="2">Secreted</location>
    </subcellularLocation>
</comment>
<evidence type="ECO:0000255" key="1"/>
<evidence type="ECO:0000305" key="2"/>
<dbReference type="EMBL" id="Z54281">
    <property type="protein sequence ID" value="CAA91046.2"/>
    <property type="molecule type" value="Genomic_DNA"/>
</dbReference>
<dbReference type="PIR" id="T22301">
    <property type="entry name" value="T22301"/>
</dbReference>
<dbReference type="RefSeq" id="NP_495882.2">
    <property type="nucleotide sequence ID" value="NM_063481.5"/>
</dbReference>
<dbReference type="FunCoup" id="P52882">
    <property type="interactions" value="227"/>
</dbReference>
<dbReference type="PaxDb" id="6239-F46C5.4"/>
<dbReference type="EnsemblMetazoa" id="F46C5.4.1">
    <property type="protein sequence ID" value="F46C5.4.1"/>
    <property type="gene ID" value="WBGene00009780"/>
</dbReference>
<dbReference type="EnsemblMetazoa" id="F46C5.4.2">
    <property type="protein sequence ID" value="F46C5.4.2"/>
    <property type="gene ID" value="WBGene00009780"/>
</dbReference>
<dbReference type="GeneID" id="185845"/>
<dbReference type="KEGG" id="cel:CELE_F46C5.4"/>
<dbReference type="UCSC" id="F46C5.4">
    <property type="organism name" value="c. elegans"/>
</dbReference>
<dbReference type="AGR" id="WB:WBGene00009780"/>
<dbReference type="CTD" id="185845"/>
<dbReference type="WormBase" id="F46C5.4">
    <property type="protein sequence ID" value="CE44350"/>
    <property type="gene ID" value="WBGene00009780"/>
</dbReference>
<dbReference type="eggNOG" id="ENOG502TJK7">
    <property type="taxonomic scope" value="Eukaryota"/>
</dbReference>
<dbReference type="HOGENOM" id="CLU_124612_0_0_1"/>
<dbReference type="InParanoid" id="P52882"/>
<dbReference type="OMA" id="CPMYSDD"/>
<dbReference type="OrthoDB" id="5791734at2759"/>
<dbReference type="PRO" id="PR:P52882"/>
<dbReference type="Proteomes" id="UP000001940">
    <property type="component" value="Chromosome II"/>
</dbReference>
<dbReference type="Bgee" id="WBGene00009780">
    <property type="expression patterns" value="Expressed in larva and 3 other cell types or tissues"/>
</dbReference>
<dbReference type="GO" id="GO:0005576">
    <property type="term" value="C:extracellular region"/>
    <property type="evidence" value="ECO:0007669"/>
    <property type="project" value="UniProtKB-SubCell"/>
</dbReference>
<dbReference type="GO" id="GO:0032222">
    <property type="term" value="P:regulation of synaptic transmission, cholinergic"/>
    <property type="evidence" value="ECO:0007669"/>
    <property type="project" value="InterPro"/>
</dbReference>
<dbReference type="GO" id="GO:0030431">
    <property type="term" value="P:sleep"/>
    <property type="evidence" value="ECO:0007669"/>
    <property type="project" value="InterPro"/>
</dbReference>
<dbReference type="InterPro" id="IPR031424">
    <property type="entry name" value="QVR-like"/>
</dbReference>
<dbReference type="Pfam" id="PF17064">
    <property type="entry name" value="QVR"/>
    <property type="match status" value="1"/>
</dbReference>
<protein>
    <recommendedName>
        <fullName>Uncharacterized protein F46C5.4</fullName>
    </recommendedName>
</protein>